<keyword id="KW-0209">Deafness</keyword>
<keyword id="KW-0225">Disease variant</keyword>
<keyword id="KW-1015">Disulfide bond</keyword>
<keyword id="KW-0325">Glycoprotein</keyword>
<keyword id="KW-0393">Immunoglobulin domain</keyword>
<keyword id="KW-1010">Non-syndromic deafness</keyword>
<keyword id="KW-1185">Reference proteome</keyword>
<keyword id="KW-0677">Repeat</keyword>
<keyword id="KW-0964">Secreted</keyword>
<keyword id="KW-0732">Signal</keyword>
<accession>Q2WEN9</accession>
<accession>A7LI12</accession>
<name>CEA16_HUMAN</name>
<sequence>MALTGYSWLLLSATFLNVGAEISITLEPAQPSEGDNVTLVVHGLSGELLAYSWYAGPTLSVSYLVASYIVSTGDETPGPAHTGREAVRPDGSLDIQGILPRHSGTYILQTFNRQLQTEVGYGHVQVHEILAQPTVLANSTALVERRDTLRLMCSSPSPTAEVRWFFNGGALPVALRLGLSPDGRVLARHGIRREEAGAYQCEVWNPVSVSRSEPINLTVYFGPERVAILQDSTTRTGCTIKVDFNTSLTLWCVSRSCPEPEYVWTFNGQALKNGQDHLNISSMTAAQEGTYTCIAKNTKTLLSGSASVVVKLSAAAVATMIVPVPTKPTEGQDVTLTVQGYPKDLLVYAWYRGPASEPNRLLSQLPSGTWIAGPAHTGREVGFPNCSLLVQKLNLTDTGRYTLKTVTVQGKTETLEVELQVAPLG</sequence>
<proteinExistence type="evidence at protein level"/>
<protein>
    <recommendedName>
        <fullName evidence="8">Cell adhesion molecule CEACAM16</fullName>
    </recommendedName>
    <alternativeName>
        <fullName>Carcinoembryonic antigen-like 2</fullName>
    </alternativeName>
    <alternativeName>
        <fullName evidence="8">Carcinoembryonic antigen-related cell adhesion molecule 16</fullName>
        <shortName evidence="9">CEA cell adhesion molecule 16</shortName>
    </alternativeName>
</protein>
<comment type="function">
    <text evidence="4 5 6">Required for proper hearing, plays a role in maintaining the integrity of the tectorial membrane.</text>
</comment>
<comment type="subunit">
    <text evidence="4 5">Homooligomer; can for homodimers and homotetramers (PubMed:21368133, PubMed:25589040). Interacts with TECTA and TECTB (PubMed:21368133).</text>
</comment>
<comment type="subcellular location">
    <subcellularLocation>
        <location evidence="5">Secreted</location>
    </subcellularLocation>
    <text evidence="1">Localizes to the tip of cochlear outer hair cells and to the tectorial membrane.</text>
</comment>
<comment type="disease" evidence="4 5">
    <disease id="DI-03419">
        <name>Deafness, autosomal dominant, 4B</name>
        <acronym>DFNA4B</acronym>
        <description>A form of non-syndromic sensorineural hearing loss. Sensorineural deafness results from damage to the neural receptors of the inner ear, the nerve pathways to the brain, or the area of the brain that receives sound information.</description>
        <dbReference type="MIM" id="614614"/>
    </disease>
    <text>The disease is caused by variants affecting the gene represented in this entry.</text>
</comment>
<comment type="disease" evidence="6">
    <disease id="DI-05550">
        <name>Deafness, autosomal recessive, 113</name>
        <acronym>DFNB113</acronym>
        <description>A form of non-syndromic, sensorineural deafness characterized by postlingual progressive hearing impairment. Sensorineural deafness results from damage to the neural receptors of the inner ear, the nerve pathways to the brain, or the area of the brain that receives sound information.</description>
        <dbReference type="MIM" id="618410"/>
    </disease>
    <text>The disease is caused by variants affecting the gene represented in this entry.</text>
</comment>
<comment type="similarity">
    <text evidence="8">Belongs to the immunoglobulin superfamily. CEA family.</text>
</comment>
<comment type="sequence caution" evidence="8">
    <conflict type="erroneous gene model prediction">
        <sequence resource="EMBL-CDS" id="AAQ05841"/>
    </conflict>
</comment>
<gene>
    <name evidence="9" type="primary">CEACAM16</name>
    <name evidence="7" type="synonym">CEAL2</name>
</gene>
<evidence type="ECO:0000250" key="1">
    <source>
        <dbReference type="UniProtKB" id="E9QA28"/>
    </source>
</evidence>
<evidence type="ECO:0000255" key="2"/>
<evidence type="ECO:0000255" key="3">
    <source>
        <dbReference type="PROSITE-ProRule" id="PRU00114"/>
    </source>
</evidence>
<evidence type="ECO:0000269" key="4">
    <source>
    </source>
</evidence>
<evidence type="ECO:0000269" key="5">
    <source>
    </source>
</evidence>
<evidence type="ECO:0000269" key="6">
    <source>
    </source>
</evidence>
<evidence type="ECO:0000303" key="7">
    <source ref="1"/>
</evidence>
<evidence type="ECO:0000305" key="8"/>
<evidence type="ECO:0000312" key="9">
    <source>
        <dbReference type="HGNC" id="HGNC:31948"/>
    </source>
</evidence>
<organism>
    <name type="scientific">Homo sapiens</name>
    <name type="common">Human</name>
    <dbReference type="NCBI Taxonomy" id="9606"/>
    <lineage>
        <taxon>Eukaryota</taxon>
        <taxon>Metazoa</taxon>
        <taxon>Chordata</taxon>
        <taxon>Craniata</taxon>
        <taxon>Vertebrata</taxon>
        <taxon>Euteleostomi</taxon>
        <taxon>Mammalia</taxon>
        <taxon>Eutheria</taxon>
        <taxon>Euarchontoglires</taxon>
        <taxon>Primates</taxon>
        <taxon>Haplorrhini</taxon>
        <taxon>Catarrhini</taxon>
        <taxon>Hominidae</taxon>
        <taxon>Homo</taxon>
    </lineage>
</organism>
<dbReference type="EMBL" id="AF479646">
    <property type="protein sequence ID" value="AAQ05841.1"/>
    <property type="status" value="ALT_SEQ"/>
    <property type="molecule type" value="Genomic_DNA"/>
</dbReference>
<dbReference type="EMBL" id="EU021223">
    <property type="protein sequence ID" value="ABS52739.1"/>
    <property type="molecule type" value="mRNA"/>
</dbReference>
<dbReference type="EMBL" id="AC092066">
    <property type="status" value="NOT_ANNOTATED_CDS"/>
    <property type="molecule type" value="Genomic_DNA"/>
</dbReference>
<dbReference type="EMBL" id="BC144608">
    <property type="status" value="NOT_ANNOTATED_CDS"/>
    <property type="molecule type" value="mRNA"/>
</dbReference>
<dbReference type="CCDS" id="CCDS54278.1"/>
<dbReference type="RefSeq" id="NP_001034302.2">
    <property type="nucleotide sequence ID" value="NM_001039213.4"/>
</dbReference>
<dbReference type="BioGRID" id="132735">
    <property type="interactions" value="16"/>
</dbReference>
<dbReference type="FunCoup" id="Q2WEN9">
    <property type="interactions" value="40"/>
</dbReference>
<dbReference type="IntAct" id="Q2WEN9">
    <property type="interactions" value="13"/>
</dbReference>
<dbReference type="STRING" id="9606.ENSP00000466561"/>
<dbReference type="GlyCosmos" id="Q2WEN9">
    <property type="glycosylation" value="5 sites, 1 glycan"/>
</dbReference>
<dbReference type="GlyGen" id="Q2WEN9">
    <property type="glycosylation" value="5 sites, 1 O-linked glycan (2 sites)"/>
</dbReference>
<dbReference type="iPTMnet" id="Q2WEN9"/>
<dbReference type="PhosphoSitePlus" id="Q2WEN9"/>
<dbReference type="BioMuta" id="CEACAM16"/>
<dbReference type="DMDM" id="391358127"/>
<dbReference type="PaxDb" id="9606-ENSP00000466561"/>
<dbReference type="Antibodypedia" id="31203">
    <property type="antibodies" value="125 antibodies from 25 providers"/>
</dbReference>
<dbReference type="DNASU" id="388551"/>
<dbReference type="Ensembl" id="ENST00000405314.2">
    <property type="protein sequence ID" value="ENSP00000385576.1"/>
    <property type="gene ID" value="ENSG00000213892.12"/>
</dbReference>
<dbReference type="Ensembl" id="ENST00000587331.7">
    <property type="protein sequence ID" value="ENSP00000466561.1"/>
    <property type="gene ID" value="ENSG00000213892.12"/>
</dbReference>
<dbReference type="GeneID" id="388551"/>
<dbReference type="KEGG" id="hsa:388551"/>
<dbReference type="MANE-Select" id="ENST00000587331.7">
    <property type="protein sequence ID" value="ENSP00000466561.1"/>
    <property type="RefSeq nucleotide sequence ID" value="NM_001039213.4"/>
    <property type="RefSeq protein sequence ID" value="NP_001034302.2"/>
</dbReference>
<dbReference type="UCSC" id="uc060zsz.1">
    <property type="organism name" value="human"/>
</dbReference>
<dbReference type="AGR" id="HGNC:31948"/>
<dbReference type="CTD" id="388551"/>
<dbReference type="DisGeNET" id="388551"/>
<dbReference type="GeneCards" id="CEACAM16"/>
<dbReference type="HGNC" id="HGNC:31948">
    <property type="gene designation" value="CEACAM16"/>
</dbReference>
<dbReference type="HPA" id="ENSG00000213892">
    <property type="expression patterns" value="Tissue enhanced (pancreas)"/>
</dbReference>
<dbReference type="MalaCards" id="CEACAM16"/>
<dbReference type="MIM" id="614591">
    <property type="type" value="gene"/>
</dbReference>
<dbReference type="MIM" id="614614">
    <property type="type" value="phenotype"/>
</dbReference>
<dbReference type="MIM" id="618410">
    <property type="type" value="phenotype"/>
</dbReference>
<dbReference type="neXtProt" id="NX_Q2WEN9"/>
<dbReference type="OpenTargets" id="ENSG00000213892"/>
<dbReference type="Orphanet" id="90635">
    <property type="disease" value="Rare autosomal dominant non-syndromic sensorineural deafness type DFNA"/>
</dbReference>
<dbReference type="Orphanet" id="90636">
    <property type="disease" value="Rare autosomal recessive non-syndromic sensorineural deafness type DFNB"/>
</dbReference>
<dbReference type="PharmGKB" id="PA142672131"/>
<dbReference type="VEuPathDB" id="HostDB:ENSG00000213892"/>
<dbReference type="eggNOG" id="ENOG502S42Z">
    <property type="taxonomic scope" value="Eukaryota"/>
</dbReference>
<dbReference type="GeneTree" id="ENSGT01100000263479"/>
<dbReference type="HOGENOM" id="CLU_024555_2_0_1"/>
<dbReference type="InParanoid" id="Q2WEN9"/>
<dbReference type="OMA" id="WCVARSC"/>
<dbReference type="OrthoDB" id="6353782at2759"/>
<dbReference type="PAN-GO" id="Q2WEN9">
    <property type="GO annotations" value="1 GO annotation based on evolutionary models"/>
</dbReference>
<dbReference type="PhylomeDB" id="Q2WEN9"/>
<dbReference type="PathwayCommons" id="Q2WEN9"/>
<dbReference type="BioGRID-ORCS" id="388551">
    <property type="hits" value="17 hits in 1147 CRISPR screens"/>
</dbReference>
<dbReference type="ChiTaRS" id="CEACAM16">
    <property type="organism name" value="human"/>
</dbReference>
<dbReference type="GenomeRNAi" id="388551"/>
<dbReference type="Pharos" id="Q2WEN9">
    <property type="development level" value="Tbio"/>
</dbReference>
<dbReference type="PRO" id="PR:Q2WEN9"/>
<dbReference type="Proteomes" id="UP000005640">
    <property type="component" value="Chromosome 19"/>
</dbReference>
<dbReference type="RNAct" id="Q2WEN9">
    <property type="molecule type" value="protein"/>
</dbReference>
<dbReference type="Bgee" id="ENSG00000213892">
    <property type="expression patterns" value="Expressed in mucosa of large intestine and 18 other cell types or tissues"/>
</dbReference>
<dbReference type="GO" id="GO:0005615">
    <property type="term" value="C:extracellular space"/>
    <property type="evidence" value="ECO:0000314"/>
    <property type="project" value="UniProtKB"/>
</dbReference>
<dbReference type="GO" id="GO:0032426">
    <property type="term" value="C:stereocilium tip"/>
    <property type="evidence" value="ECO:0000250"/>
    <property type="project" value="UniProtKB"/>
</dbReference>
<dbReference type="GO" id="GO:0042802">
    <property type="term" value="F:identical protein binding"/>
    <property type="evidence" value="ECO:0000314"/>
    <property type="project" value="UniProtKB"/>
</dbReference>
<dbReference type="GO" id="GO:0007605">
    <property type="term" value="P:sensory perception of sound"/>
    <property type="evidence" value="ECO:0000315"/>
    <property type="project" value="UniProtKB"/>
</dbReference>
<dbReference type="CDD" id="cd05740">
    <property type="entry name" value="IgI_hCEACAM_2_4_6_like"/>
    <property type="match status" value="1"/>
</dbReference>
<dbReference type="CDD" id="cd05774">
    <property type="entry name" value="IgV_CEACAM_D1"/>
    <property type="match status" value="2"/>
</dbReference>
<dbReference type="FunFam" id="2.60.40.10:FF:000947">
    <property type="entry name" value="Carcinoembryonic antigen related cell adhesion molecule 16"/>
    <property type="match status" value="1"/>
</dbReference>
<dbReference type="FunFam" id="2.60.40.10:FF:001283">
    <property type="entry name" value="Carcinoembryonic antigen related cell adhesion molecule 16"/>
    <property type="match status" value="1"/>
</dbReference>
<dbReference type="FunFam" id="2.60.40.10:FF:000244">
    <property type="entry name" value="carcinoembryonic antigen-related cell adhesion molecule 16"/>
    <property type="match status" value="1"/>
</dbReference>
<dbReference type="FunFam" id="2.60.40.10:FF:001282">
    <property type="entry name" value="carcinoembryonic antigen-related cell adhesion molecule 16"/>
    <property type="match status" value="1"/>
</dbReference>
<dbReference type="Gene3D" id="2.60.40.10">
    <property type="entry name" value="Immunoglobulins"/>
    <property type="match status" value="4"/>
</dbReference>
<dbReference type="InterPro" id="IPR050831">
    <property type="entry name" value="CEA_cell_adhesion"/>
</dbReference>
<dbReference type="InterPro" id="IPR007110">
    <property type="entry name" value="Ig-like_dom"/>
</dbReference>
<dbReference type="InterPro" id="IPR036179">
    <property type="entry name" value="Ig-like_dom_sf"/>
</dbReference>
<dbReference type="InterPro" id="IPR013783">
    <property type="entry name" value="Ig-like_fold"/>
</dbReference>
<dbReference type="InterPro" id="IPR003599">
    <property type="entry name" value="Ig_sub"/>
</dbReference>
<dbReference type="InterPro" id="IPR003598">
    <property type="entry name" value="Ig_sub2"/>
</dbReference>
<dbReference type="InterPro" id="IPR013106">
    <property type="entry name" value="Ig_V-set"/>
</dbReference>
<dbReference type="PANTHER" id="PTHR44427:SF1">
    <property type="entry name" value="CARCINOEMBRYONIC ANTIGEN-RELATED CELL ADHESION MOLECULE 1"/>
    <property type="match status" value="1"/>
</dbReference>
<dbReference type="PANTHER" id="PTHR44427">
    <property type="entry name" value="CARCINOEMBRYONIC ANTIGEN-RELATED CELL ADHESION MOLECULE 19"/>
    <property type="match status" value="1"/>
</dbReference>
<dbReference type="Pfam" id="PF13895">
    <property type="entry name" value="Ig_2"/>
    <property type="match status" value="1"/>
</dbReference>
<dbReference type="Pfam" id="PF13927">
    <property type="entry name" value="Ig_3"/>
    <property type="match status" value="1"/>
</dbReference>
<dbReference type="Pfam" id="PF07686">
    <property type="entry name" value="V-set"/>
    <property type="match status" value="2"/>
</dbReference>
<dbReference type="SMART" id="SM00409">
    <property type="entry name" value="IG"/>
    <property type="match status" value="4"/>
</dbReference>
<dbReference type="SMART" id="SM00408">
    <property type="entry name" value="IGc2"/>
    <property type="match status" value="2"/>
</dbReference>
<dbReference type="SUPFAM" id="SSF48726">
    <property type="entry name" value="Immunoglobulin"/>
    <property type="match status" value="4"/>
</dbReference>
<dbReference type="PROSITE" id="PS50835">
    <property type="entry name" value="IG_LIKE"/>
    <property type="match status" value="2"/>
</dbReference>
<reference key="1">
    <citation type="submission" date="2002-01" db="EMBL/GenBank/DDBJ databases">
        <title>Molecular characterization, cloning, physical mapping, and expression analysis of a novel gene, CEAL2, encoding a carcinoembryonic antigen-like protein which is differentially expressed in different malignancies.</title>
        <authorList>
            <person name="Scorilas A."/>
        </authorList>
    </citation>
    <scope>NUCLEOTIDE SEQUENCE [GENOMIC DNA]</scope>
</reference>
<reference key="2">
    <citation type="submission" date="2007-07" db="EMBL/GenBank/DDBJ databases">
        <title>Cloning of new carcinoembryonic antigen (CEA) family members.</title>
        <authorList>
            <person name="Krupar R.F.A."/>
            <person name="Sunami K."/>
            <person name="Zimmermann W."/>
            <person name="Kammerer R."/>
        </authorList>
    </citation>
    <scope>NUCLEOTIDE SEQUENCE [MRNA]</scope>
</reference>
<reference key="3">
    <citation type="journal article" date="2004" name="Nature">
        <title>The DNA sequence and biology of human chromosome 19.</title>
        <authorList>
            <person name="Grimwood J."/>
            <person name="Gordon L.A."/>
            <person name="Olsen A.S."/>
            <person name="Terry A."/>
            <person name="Schmutz J."/>
            <person name="Lamerdin J.E."/>
            <person name="Hellsten U."/>
            <person name="Goodstein D."/>
            <person name="Couronne O."/>
            <person name="Tran-Gyamfi M."/>
            <person name="Aerts A."/>
            <person name="Altherr M."/>
            <person name="Ashworth L."/>
            <person name="Bajorek E."/>
            <person name="Black S."/>
            <person name="Branscomb E."/>
            <person name="Caenepeel S."/>
            <person name="Carrano A.V."/>
            <person name="Caoile C."/>
            <person name="Chan Y.M."/>
            <person name="Christensen M."/>
            <person name="Cleland C.A."/>
            <person name="Copeland A."/>
            <person name="Dalin E."/>
            <person name="Dehal P."/>
            <person name="Denys M."/>
            <person name="Detter J.C."/>
            <person name="Escobar J."/>
            <person name="Flowers D."/>
            <person name="Fotopulos D."/>
            <person name="Garcia C."/>
            <person name="Georgescu A.M."/>
            <person name="Glavina T."/>
            <person name="Gomez M."/>
            <person name="Gonzales E."/>
            <person name="Groza M."/>
            <person name="Hammon N."/>
            <person name="Hawkins T."/>
            <person name="Haydu L."/>
            <person name="Ho I."/>
            <person name="Huang W."/>
            <person name="Israni S."/>
            <person name="Jett J."/>
            <person name="Kadner K."/>
            <person name="Kimball H."/>
            <person name="Kobayashi A."/>
            <person name="Larionov V."/>
            <person name="Leem S.-H."/>
            <person name="Lopez F."/>
            <person name="Lou Y."/>
            <person name="Lowry S."/>
            <person name="Malfatti S."/>
            <person name="Martinez D."/>
            <person name="McCready P.M."/>
            <person name="Medina C."/>
            <person name="Morgan J."/>
            <person name="Nelson K."/>
            <person name="Nolan M."/>
            <person name="Ovcharenko I."/>
            <person name="Pitluck S."/>
            <person name="Pollard M."/>
            <person name="Popkie A.P."/>
            <person name="Predki P."/>
            <person name="Quan G."/>
            <person name="Ramirez L."/>
            <person name="Rash S."/>
            <person name="Retterer J."/>
            <person name="Rodriguez A."/>
            <person name="Rogers S."/>
            <person name="Salamov A."/>
            <person name="Salazar A."/>
            <person name="She X."/>
            <person name="Smith D."/>
            <person name="Slezak T."/>
            <person name="Solovyev V."/>
            <person name="Thayer N."/>
            <person name="Tice H."/>
            <person name="Tsai M."/>
            <person name="Ustaszewska A."/>
            <person name="Vo N."/>
            <person name="Wagner M."/>
            <person name="Wheeler J."/>
            <person name="Wu K."/>
            <person name="Xie G."/>
            <person name="Yang J."/>
            <person name="Dubchak I."/>
            <person name="Furey T.S."/>
            <person name="DeJong P."/>
            <person name="Dickson M."/>
            <person name="Gordon D."/>
            <person name="Eichler E.E."/>
            <person name="Pennacchio L.A."/>
            <person name="Richardson P."/>
            <person name="Stubbs L."/>
            <person name="Rokhsar D.S."/>
            <person name="Myers R.M."/>
            <person name="Rubin E.M."/>
            <person name="Lucas S.M."/>
        </authorList>
    </citation>
    <scope>NUCLEOTIDE SEQUENCE [LARGE SCALE GENOMIC DNA]</scope>
</reference>
<reference key="4">
    <citation type="journal article" date="2004" name="Genome Res.">
        <title>The status, quality, and expansion of the NIH full-length cDNA project: the Mammalian Gene Collection (MGC).</title>
        <authorList>
            <consortium name="The MGC Project Team"/>
        </authorList>
    </citation>
    <scope>NUCLEOTIDE SEQUENCE [LARGE SCALE MRNA]</scope>
</reference>
<reference key="5">
    <citation type="journal article" date="2011" name="Proc. Natl. Acad. Sci. U.S.A.">
        <title>Carcinoembryonic antigen-related cell adhesion molecule 16 interacts with alpha-tectorin and is mutated in autosomal dominant hearing loss (DFNA4).</title>
        <authorList>
            <person name="Zheng J."/>
            <person name="Miller K.K."/>
            <person name="Yang T."/>
            <person name="Hildebrand M.S."/>
            <person name="Shearer A.E."/>
            <person name="DeLuca A.P."/>
            <person name="Scheetz T.E."/>
            <person name="Drummond J."/>
            <person name="Scherer S.E."/>
            <person name="Legan P.K."/>
            <person name="Goodyear R.J."/>
            <person name="Richardson G.P."/>
            <person name="Cheatham M.A."/>
            <person name="Smith R.J."/>
            <person name="Dallos P."/>
        </authorList>
    </citation>
    <scope>INVOLVEMENT IN DFNA4B</scope>
    <scope>VARIANT DFNA4B PRO-140</scope>
    <scope>FUNCTION</scope>
    <scope>SUBUNIT</scope>
    <scope>INTERACTION WITH TECTA</scope>
</reference>
<reference key="6">
    <citation type="journal article" date="2015" name="J. Hum. Genet.">
        <title>Exome sequencing identifies a novel CEACAM16 mutation associated with autosomal dominant nonsyndromic hearing loss DFNA4B in a Chinese family.</title>
        <authorList>
            <person name="Wang H."/>
            <person name="Wang X."/>
            <person name="He C."/>
            <person name="Li H."/>
            <person name="Qing J."/>
            <person name="Grati M."/>
            <person name="Hu Z."/>
            <person name="Li J."/>
            <person name="Hu Y."/>
            <person name="Xia K."/>
            <person name="Mei L."/>
            <person name="Wang X."/>
            <person name="Yu J."/>
            <person name="Chen H."/>
            <person name="Jiang L."/>
            <person name="Liu Y."/>
            <person name="Men M."/>
            <person name="Zhang H."/>
            <person name="Guan L."/>
            <person name="Xiao J."/>
            <person name="Zhang J."/>
            <person name="Liu X."/>
            <person name="Feng Y."/>
        </authorList>
    </citation>
    <scope>CHARACTERIZATION OF VARIANT DFNA4B ARG-169</scope>
    <scope>FUNCTION</scope>
    <scope>SUBCELLULAR LOCATION</scope>
    <scope>SUBUNIT</scope>
</reference>
<reference key="7">
    <citation type="journal article" date="2018" name="J. Med. Genet.">
        <title>Old gene, new phenotype: splice-altering variants in CEACAM16 cause recessive non-syndromic hearing impairment.</title>
        <authorList>
            <person name="Booth K.T."/>
            <person name="Kahrizi K."/>
            <person name="Najmabadi H."/>
            <person name="Azaiez H."/>
            <person name="Smith R.J."/>
        </authorList>
    </citation>
    <scope>INVOLVEMENT IN DFNB113</scope>
    <scope>FUNCTION</scope>
</reference>
<feature type="signal peptide" evidence="2">
    <location>
        <begin position="1"/>
        <end position="20"/>
    </location>
</feature>
<feature type="chain" id="PRO_0000297564" description="Cell adhesion molecule CEACAM16">
    <location>
        <begin position="21"/>
        <end position="425"/>
    </location>
</feature>
<feature type="domain" description="Ig-like C2-type 1">
    <location>
        <begin position="133"/>
        <end position="218"/>
    </location>
</feature>
<feature type="domain" description="Ig-like C2-type 2">
    <location>
        <begin position="223"/>
        <end position="309"/>
    </location>
</feature>
<feature type="glycosylation site" description="N-linked (GlcNAc...) asparagine" evidence="2">
    <location>
        <position position="36"/>
    </location>
</feature>
<feature type="glycosylation site" description="N-linked (GlcNAc...) asparagine" evidence="2">
    <location>
        <position position="216"/>
    </location>
</feature>
<feature type="glycosylation site" description="N-linked (GlcNAc...) asparagine" evidence="2">
    <location>
        <position position="394"/>
    </location>
</feature>
<feature type="disulfide bond" evidence="3">
    <location>
        <begin position="153"/>
        <end position="201"/>
    </location>
</feature>
<feature type="disulfide bond" evidence="3">
    <location>
        <begin position="252"/>
        <end position="293"/>
    </location>
</feature>
<feature type="sequence variant" id="VAR_067769" description="In DFNA4B; dbSNP:rs387907149." evidence="4">
    <original>T</original>
    <variation>P</variation>
    <location>
        <position position="140"/>
    </location>
</feature>
<feature type="sequence variant" id="VAR_072720" description="In DFNA4B; impairs homooligomerization of the protein; decreases secretion of the protein; dbSNP:rs876661405." evidence="5">
    <original>G</original>
    <variation>R</variation>
    <location>
        <position position="169"/>
    </location>
</feature>